<reference key="1">
    <citation type="journal article" date="1990" name="J. Bacteriol.">
        <title>Cloning and sequencing of a bile acid-inducible operon from Eubacterium sp. strain VPI 12708.</title>
        <authorList>
            <person name="Mallonee D.H."/>
            <person name="White W.B."/>
            <person name="Hylemon P.B."/>
        </authorList>
    </citation>
    <scope>NUCLEOTIDE SEQUENCE [GENOMIC DNA]</scope>
    <source>
        <strain>JCM 10418 / VPI 12708</strain>
    </source>
</reference>
<reference key="2">
    <citation type="submission" date="2007-04" db="EMBL/GenBank/DDBJ databases">
        <authorList>
            <person name="Kang D.-J."/>
            <person name="Ridlon J.M."/>
            <person name="Moore D.R. II"/>
            <person name="Barnes S."/>
            <person name="Hylemon P.B."/>
        </authorList>
    </citation>
    <scope>SEQUENCE REVISION</scope>
</reference>
<reference key="3">
    <citation type="journal article" date="2008" name="Biochim. Biophys. Acta">
        <title>Clostridium scindens baiCD and baiH genes encode stereo-specific 7alpha/7beta-hydroxy-3-oxo-delta4-cholenoic acid oxidoreductases.</title>
        <authorList>
            <person name="Kang D.J."/>
            <person name="Ridlon J.M."/>
            <person name="Moore D.R. II"/>
            <person name="Barnes S."/>
            <person name="Hylemon P.B."/>
        </authorList>
    </citation>
    <scope>FUNCTION</scope>
    <scope>CATALYTIC ACTIVITY</scope>
    <scope>PATHWAY</scope>
    <source>
        <strain>JCM 10418 / VPI 12708</strain>
    </source>
</reference>
<comment type="function">
    <text evidence="3">Stereo-specific NAD(H)-dependent 3-oxo-delta4-cholenoic acid oxidoreductase involved in bile acid 7alpha-dehydroxylation.</text>
</comment>
<comment type="catalytic activity">
    <reaction evidence="3">
        <text>7alpha,12alpha-dihydroxy-3-oxochol-24-oyl-CoA + NAD(+) = 7alpha,12alpha-dihydroxy-3-oxochol-4-en-24-oyl-CoA + NADH + H(+)</text>
        <dbReference type="Rhea" id="RHEA:56664"/>
        <dbReference type="ChEBI" id="CHEBI:15378"/>
        <dbReference type="ChEBI" id="CHEBI:57540"/>
        <dbReference type="ChEBI" id="CHEBI:57945"/>
        <dbReference type="ChEBI" id="CHEBI:132977"/>
        <dbReference type="ChEBI" id="CHEBI:136700"/>
        <dbReference type="EC" id="1.3.1.115"/>
    </reaction>
</comment>
<comment type="catalytic activity">
    <reaction evidence="3">
        <text>7alpha-hydroxy-3-oxochol-24-oyl-CoA + NAD(+) = 7alpha-hydroxy-3-oxochol-4-en-24-oyl-CoA + NADH + H(+)</text>
        <dbReference type="Rhea" id="RHEA:56660"/>
        <dbReference type="ChEBI" id="CHEBI:15378"/>
        <dbReference type="ChEBI" id="CHEBI:57540"/>
        <dbReference type="ChEBI" id="CHEBI:57945"/>
        <dbReference type="ChEBI" id="CHEBI:136698"/>
        <dbReference type="ChEBI" id="CHEBI:140636"/>
        <dbReference type="EC" id="1.3.1.115"/>
    </reaction>
</comment>
<comment type="cofactor">
    <cofactor evidence="2">
        <name>FMN</name>
        <dbReference type="ChEBI" id="CHEBI:58210"/>
    </cofactor>
</comment>
<comment type="cofactor">
    <cofactor evidence="2">
        <name>FAD</name>
        <dbReference type="ChEBI" id="CHEBI:57692"/>
    </cofactor>
</comment>
<comment type="cofactor">
    <cofactor evidence="2">
        <name>[4Fe-4S] cluster</name>
        <dbReference type="ChEBI" id="CHEBI:49883"/>
    </cofactor>
</comment>
<comment type="pathway">
    <text evidence="7">Lipid metabolism; bile acid degradation.</text>
</comment>
<comment type="similarity">
    <text evidence="6">In the N-terminal section; belongs to the NADH:flavin oxidoreductase/NADH oxidase family.</text>
</comment>
<comment type="caution">
    <text evidence="8">Was originally thought to be the product of two separate ORFs, baiC and baiD.</text>
</comment>
<sequence length="639" mass="70274">MSYEALFSPFKVRGLELKNRIVLPGMNTKMAKNKHDIGEDMIAYHVARAKAGCALNIFECVALCPAPHAYMYMGLYTDHHVEQLKKLTDAVHEAGGKMGIQLWHGGFSPQMFFDETNTLETPDTLTVERIHEIVEEFGRGARMAVQAGFDAVEFHAAHSYLPHEFLSPGMNKRTDEYGGSFENRCRFCYEVVQAIRSNIPDDMPFFMRADCIDELMEQTMTEEEIVTFINKCAELGVDVADLSRGNATSFATVYEVPPFNLAHGFNIENIYNIKKQINIPVMGVGRINTGEMANKVIEEGKFDLVGIGRAQLADPNWITKVREGKEDLIRHCIGCDQGCYDAVINPKMKHITCTHNPGLCLEYQGMPKTDAPKKVMIVGGGMAGMIAAEVLKTRGHNPVIFEASDKLAGQFRLAGVAPMKQDWADVAEWEAKEVERLGIEVRLNTEVTAETIKEFNPDNVIIAVGSTYALPEIPGIDSPSVYSQYQVLKGEVNPTGRVAVIGCGLVGTEVAELLASRGAQVIAIERKGVGTGLSMLRRMFMNPEFKYYKIAKMSGTNVTALEQGKVHYIMTDKKTKEVTQGVLECDATVICTGITARPSDGLKARCEELGIPVEVIGDAAGARDCTIATREGYDAGMAI</sequence>
<name>BAICD_CLOSV</name>
<feature type="chain" id="PRO_0000194469" description="3-oxocholoyl-CoA 4-desaturase">
    <location>
        <begin position="1"/>
        <end position="639"/>
    </location>
</feature>
<feature type="active site" description="Proton donor" evidence="2">
    <location>
        <position position="160"/>
    </location>
</feature>
<feature type="binding site" evidence="2">
    <location>
        <position position="101"/>
    </location>
    <ligand>
        <name>FMN</name>
        <dbReference type="ChEBI" id="CHEBI:58210"/>
    </ligand>
</feature>
<feature type="binding site" evidence="1">
    <location>
        <begin position="155"/>
        <end position="158"/>
    </location>
    <ligand>
        <name>substrate</name>
    </ligand>
</feature>
<feature type="binding site" evidence="2">
    <location>
        <position position="208"/>
    </location>
    <ligand>
        <name>FMN</name>
        <dbReference type="ChEBI" id="CHEBI:58210"/>
    </ligand>
</feature>
<feature type="binding site" evidence="2">
    <location>
        <position position="286"/>
    </location>
    <ligand>
        <name>FMN</name>
        <dbReference type="ChEBI" id="CHEBI:58210"/>
    </ligand>
</feature>
<feature type="binding site" evidence="2">
    <location>
        <begin position="308"/>
        <end position="309"/>
    </location>
    <ligand>
        <name>FMN</name>
        <dbReference type="ChEBI" id="CHEBI:58210"/>
    </ligand>
</feature>
<feature type="binding site" evidence="2">
    <location>
        <position position="332"/>
    </location>
    <ligand>
        <name>[4Fe-4S] cluster</name>
        <dbReference type="ChEBI" id="CHEBI:49883"/>
    </ligand>
</feature>
<feature type="binding site" evidence="2">
    <location>
        <position position="335"/>
    </location>
    <ligand>
        <name>[4Fe-4S] cluster</name>
        <dbReference type="ChEBI" id="CHEBI:49883"/>
    </ligand>
</feature>
<feature type="binding site" evidence="2">
    <location>
        <position position="337"/>
    </location>
    <ligand>
        <name>FAD</name>
        <dbReference type="ChEBI" id="CHEBI:57692"/>
    </ligand>
</feature>
<feature type="binding site" evidence="2">
    <location>
        <position position="339"/>
    </location>
    <ligand>
        <name>[4Fe-4S] cluster</name>
        <dbReference type="ChEBI" id="CHEBI:49883"/>
    </ligand>
</feature>
<feature type="binding site" evidence="1">
    <location>
        <position position="353"/>
    </location>
    <ligand>
        <name>[4Fe-4S] cluster</name>
        <dbReference type="ChEBI" id="CHEBI:49883"/>
    </ligand>
</feature>
<feature type="binding site" evidence="2">
    <location>
        <position position="383"/>
    </location>
    <ligand>
        <name>FAD</name>
        <dbReference type="ChEBI" id="CHEBI:57692"/>
    </ligand>
</feature>
<feature type="binding site" evidence="2">
    <location>
        <position position="402"/>
    </location>
    <ligand>
        <name>FAD</name>
        <dbReference type="ChEBI" id="CHEBI:57692"/>
    </ligand>
</feature>
<feature type="binding site" evidence="2">
    <location>
        <position position="410"/>
    </location>
    <ligand>
        <name>FAD</name>
        <dbReference type="ChEBI" id="CHEBI:57692"/>
    </ligand>
</feature>
<feature type="binding site" evidence="2">
    <location>
        <position position="420"/>
    </location>
    <ligand>
        <name>FAD</name>
        <dbReference type="ChEBI" id="CHEBI:57692"/>
    </ligand>
</feature>
<feature type="binding site" evidence="2">
    <location>
        <position position="447"/>
    </location>
    <ligand>
        <name>FAD</name>
        <dbReference type="ChEBI" id="CHEBI:57692"/>
    </ligand>
</feature>
<accession>P19410</accession>
<accession>P19411</accession>
<organism>
    <name type="scientific">Clostridium scindens (strain JCM 10418 / VPI 12708)</name>
    <dbReference type="NCBI Taxonomy" id="29347"/>
    <lineage>
        <taxon>Bacteria</taxon>
        <taxon>Bacillati</taxon>
        <taxon>Bacillota</taxon>
        <taxon>Clostridia</taxon>
        <taxon>Lachnospirales</taxon>
        <taxon>Lachnospiraceae</taxon>
    </lineage>
</organism>
<keyword id="KW-0004">4Fe-4S</keyword>
<keyword id="KW-0088">Bile acid catabolism</keyword>
<keyword id="KW-0274">FAD</keyword>
<keyword id="KW-0285">Flavoprotein</keyword>
<keyword id="KW-0288">FMN</keyword>
<keyword id="KW-0408">Iron</keyword>
<keyword id="KW-0411">Iron-sulfur</keyword>
<keyword id="KW-0442">Lipid degradation</keyword>
<keyword id="KW-0443">Lipid metabolism</keyword>
<keyword id="KW-0479">Metal-binding</keyword>
<keyword id="KW-0520">NAD</keyword>
<keyword id="KW-0560">Oxidoreductase</keyword>
<keyword id="KW-0753">Steroid metabolism</keyword>
<protein>
    <recommendedName>
        <fullName evidence="6">3-oxocholoyl-CoA 4-desaturase</fullName>
        <ecNumber evidence="3">1.3.1.115</ecNumber>
    </recommendedName>
    <alternativeName>
        <fullName>Bile acid-inducible operon protein C</fullName>
    </alternativeName>
    <alternativeName>
        <fullName>Bile acid-inducible operon protein CD</fullName>
    </alternativeName>
    <alternativeName>
        <fullName>Bile acid-inducible operon protein D</fullName>
    </alternativeName>
</protein>
<dbReference type="EC" id="1.3.1.115" evidence="3"/>
<dbReference type="EMBL" id="U57489">
    <property type="protein sequence ID" value="AAC45411.2"/>
    <property type="molecule type" value="Genomic_DNA"/>
</dbReference>
<dbReference type="RefSeq" id="WP_025645824.1">
    <property type="nucleotide sequence ID" value="NZ_CANSEQ010000038.1"/>
</dbReference>
<dbReference type="SMR" id="P19410"/>
<dbReference type="KEGG" id="ag:AAC45411"/>
<dbReference type="BioCyc" id="MetaCyc:BAI3OXOEUBSP-MONOMER"/>
<dbReference type="BRENDA" id="1.3.1.115">
    <property type="organism ID" value="1513"/>
</dbReference>
<dbReference type="UniPathway" id="UPA00279"/>
<dbReference type="GO" id="GO:0005737">
    <property type="term" value="C:cytoplasm"/>
    <property type="evidence" value="ECO:0000305"/>
    <property type="project" value="UniProt"/>
</dbReference>
<dbReference type="GO" id="GO:0051539">
    <property type="term" value="F:4 iron, 4 sulfur cluster binding"/>
    <property type="evidence" value="ECO:0007669"/>
    <property type="project" value="UniProtKB-KW"/>
</dbReference>
<dbReference type="GO" id="GO:0010181">
    <property type="term" value="F:FMN binding"/>
    <property type="evidence" value="ECO:0007669"/>
    <property type="project" value="InterPro"/>
</dbReference>
<dbReference type="GO" id="GO:0046872">
    <property type="term" value="F:metal ion binding"/>
    <property type="evidence" value="ECO:0007669"/>
    <property type="project" value="UniProtKB-KW"/>
</dbReference>
<dbReference type="GO" id="GO:0016620">
    <property type="term" value="F:oxidoreductase activity, acting on the aldehyde or oxo group of donors, NAD or NADP as acceptor"/>
    <property type="evidence" value="ECO:0000314"/>
    <property type="project" value="UniProt"/>
</dbReference>
<dbReference type="GO" id="GO:0030573">
    <property type="term" value="P:bile acid catabolic process"/>
    <property type="evidence" value="ECO:0000314"/>
    <property type="project" value="UniProt"/>
</dbReference>
<dbReference type="GO" id="GO:0016042">
    <property type="term" value="P:lipid catabolic process"/>
    <property type="evidence" value="ECO:0007669"/>
    <property type="project" value="UniProtKB-KW"/>
</dbReference>
<dbReference type="CDD" id="cd02803">
    <property type="entry name" value="OYE_like_FMN_family"/>
    <property type="match status" value="1"/>
</dbReference>
<dbReference type="Gene3D" id="3.20.20.70">
    <property type="entry name" value="Aldolase class I"/>
    <property type="match status" value="1"/>
</dbReference>
<dbReference type="Gene3D" id="3.50.50.60">
    <property type="entry name" value="FAD/NAD(P)-binding domain"/>
    <property type="match status" value="1"/>
</dbReference>
<dbReference type="Gene3D" id="3.40.50.720">
    <property type="entry name" value="NAD(P)-binding Rossmann-like Domain"/>
    <property type="match status" value="1"/>
</dbReference>
<dbReference type="InterPro" id="IPR013785">
    <property type="entry name" value="Aldolase_TIM"/>
</dbReference>
<dbReference type="InterPro" id="IPR036188">
    <property type="entry name" value="FAD/NAD-bd_sf"/>
</dbReference>
<dbReference type="InterPro" id="IPR023753">
    <property type="entry name" value="FAD/NAD-binding_dom"/>
</dbReference>
<dbReference type="InterPro" id="IPR051793">
    <property type="entry name" value="NADH:flavin_oxidoreductase"/>
</dbReference>
<dbReference type="InterPro" id="IPR001155">
    <property type="entry name" value="OxRdtase_FMN_N"/>
</dbReference>
<dbReference type="PANTHER" id="PTHR42917">
    <property type="entry name" value="2,4-DIENOYL-COA REDUCTASE"/>
    <property type="match status" value="1"/>
</dbReference>
<dbReference type="PANTHER" id="PTHR42917:SF2">
    <property type="entry name" value="2,4-DIENOYL-COA REDUCTASE [(2E)-ENOYL-COA-PRODUCING]"/>
    <property type="match status" value="1"/>
</dbReference>
<dbReference type="Pfam" id="PF00724">
    <property type="entry name" value="Oxidored_FMN"/>
    <property type="match status" value="1"/>
</dbReference>
<dbReference type="Pfam" id="PF07992">
    <property type="entry name" value="Pyr_redox_2"/>
    <property type="match status" value="1"/>
</dbReference>
<dbReference type="PRINTS" id="PR00368">
    <property type="entry name" value="FADPNR"/>
</dbReference>
<dbReference type="SUPFAM" id="SSF51905">
    <property type="entry name" value="FAD/NAD(P)-binding domain"/>
    <property type="match status" value="1"/>
</dbReference>
<dbReference type="SUPFAM" id="SSF51395">
    <property type="entry name" value="FMN-linked oxidoreductases"/>
    <property type="match status" value="1"/>
</dbReference>
<dbReference type="SUPFAM" id="SSF51971">
    <property type="entry name" value="Nucleotide-binding domain"/>
    <property type="match status" value="1"/>
</dbReference>
<gene>
    <name evidence="4" type="primary">baiCD</name>
    <name evidence="5" type="synonym">baiC</name>
    <name evidence="5" type="synonym">baiD</name>
</gene>
<proteinExistence type="evidence at protein level"/>
<evidence type="ECO:0000250" key="1"/>
<evidence type="ECO:0000250" key="2">
    <source>
        <dbReference type="UniProtKB" id="P42593"/>
    </source>
</evidence>
<evidence type="ECO:0000269" key="3">
    <source>
    </source>
</evidence>
<evidence type="ECO:0000303" key="4">
    <source>
    </source>
</evidence>
<evidence type="ECO:0000303" key="5">
    <source>
    </source>
</evidence>
<evidence type="ECO:0000305" key="6"/>
<evidence type="ECO:0000305" key="7">
    <source>
    </source>
</evidence>
<evidence type="ECO:0000305" key="8">
    <source>
    </source>
</evidence>